<organism>
    <name type="scientific">Deinococcus radiodurans (strain ATCC 13939 / DSM 20539 / JCM 16871 / CCUG 27074 / LMG 4051 / NBRC 15346 / NCIMB 9279 / VKM B-1422 / R1)</name>
    <dbReference type="NCBI Taxonomy" id="243230"/>
    <lineage>
        <taxon>Bacteria</taxon>
        <taxon>Thermotogati</taxon>
        <taxon>Deinococcota</taxon>
        <taxon>Deinococci</taxon>
        <taxon>Deinococcales</taxon>
        <taxon>Deinococcaceae</taxon>
        <taxon>Deinococcus</taxon>
    </lineage>
</organism>
<name>LDH_DEIRA</name>
<protein>
    <recommendedName>
        <fullName evidence="1 4">L-lactate dehydrogenase</fullName>
        <shortName evidence="1 4">L-LDH</shortName>
        <ecNumber evidence="1 2">1.1.1.27</ecNumber>
    </recommendedName>
    <alternativeName>
        <fullName evidence="3">2-ketoacid:NAD-dependent dehydrogenase</fullName>
    </alternativeName>
</protein>
<keyword id="KW-0002">3D-structure</keyword>
<keyword id="KW-0021">Allosteric enzyme</keyword>
<keyword id="KW-0963">Cytoplasm</keyword>
<keyword id="KW-0520">NAD</keyword>
<keyword id="KW-0560">Oxidoreductase</keyword>
<keyword id="KW-1185">Reference proteome</keyword>
<feature type="chain" id="PRO_0000168341" description="L-lactate dehydrogenase">
    <location>
        <begin position="1"/>
        <end position="304"/>
    </location>
</feature>
<feature type="active site" description="Proton acceptor" evidence="1">
    <location>
        <position position="170"/>
    </location>
</feature>
<feature type="binding site" evidence="1">
    <location>
        <position position="11"/>
    </location>
    <ligand>
        <name>NAD(+)</name>
        <dbReference type="ChEBI" id="CHEBI:57540"/>
    </ligand>
</feature>
<feature type="binding site" evidence="1">
    <location>
        <position position="32"/>
    </location>
    <ligand>
        <name>NAD(+)</name>
        <dbReference type="ChEBI" id="CHEBI:57540"/>
    </ligand>
</feature>
<feature type="binding site" evidence="1">
    <location>
        <position position="37"/>
    </location>
    <ligand>
        <name>NAD(+)</name>
        <dbReference type="ChEBI" id="CHEBI:57540"/>
    </ligand>
</feature>
<feature type="binding site" evidence="1">
    <location>
        <begin position="76"/>
        <end position="77"/>
    </location>
    <ligand>
        <name>NAD(+)</name>
        <dbReference type="ChEBI" id="CHEBI:57540"/>
    </ligand>
</feature>
<feature type="binding site" evidence="1">
    <location>
        <position position="79"/>
    </location>
    <ligand>
        <name>substrate</name>
    </ligand>
</feature>
<feature type="binding site" evidence="1">
    <location>
        <position position="85"/>
    </location>
    <ligand>
        <name>substrate</name>
    </ligand>
</feature>
<feature type="binding site" evidence="1">
    <location>
        <begin position="117"/>
        <end position="120"/>
    </location>
    <ligand>
        <name>substrate</name>
    </ligand>
</feature>
<feature type="binding site" evidence="1">
    <location>
        <position position="138"/>
    </location>
    <ligand>
        <name>NAD(+)</name>
        <dbReference type="ChEBI" id="CHEBI:57540"/>
    </ligand>
</feature>
<feature type="binding site" evidence="1">
    <location>
        <begin position="143"/>
        <end position="146"/>
    </location>
    <ligand>
        <name>substrate</name>
    </ligand>
</feature>
<feature type="binding site" evidence="1">
    <location>
        <position position="148"/>
    </location>
    <ligand>
        <name>beta-D-fructose 1,6-bisphosphate</name>
        <dbReference type="ChEBI" id="CHEBI:32966"/>
        <note>allosteric activator</note>
    </ligand>
</feature>
<feature type="binding site" evidence="1">
    <location>
        <position position="163"/>
    </location>
    <ligand>
        <name>beta-D-fructose 1,6-bisphosphate</name>
        <dbReference type="ChEBI" id="CHEBI:32966"/>
        <note>allosteric activator</note>
    </ligand>
</feature>
<feature type="binding site" evidence="1">
    <location>
        <position position="225"/>
    </location>
    <ligand>
        <name>substrate</name>
    </ligand>
</feature>
<feature type="sequence conflict" description="In Ref. 2; BAA21471." evidence="5" ref="2">
    <original>Q</original>
    <variation>R</variation>
    <location>
        <position position="270"/>
    </location>
</feature>
<feature type="strand" evidence="6">
    <location>
        <begin position="2"/>
        <end position="6"/>
    </location>
</feature>
<feature type="helix" evidence="6">
    <location>
        <begin position="10"/>
        <end position="21"/>
    </location>
</feature>
<feature type="strand" evidence="6">
    <location>
        <begin position="26"/>
        <end position="31"/>
    </location>
</feature>
<feature type="helix" evidence="6">
    <location>
        <begin position="35"/>
        <end position="45"/>
    </location>
</feature>
<feature type="strand" evidence="6">
    <location>
        <begin position="56"/>
        <end position="60"/>
    </location>
</feature>
<feature type="helix" evidence="6">
    <location>
        <begin position="62"/>
        <end position="65"/>
    </location>
</feature>
<feature type="strand" evidence="6">
    <location>
        <begin position="69"/>
        <end position="73"/>
    </location>
</feature>
<feature type="helix" evidence="6">
    <location>
        <begin position="89"/>
        <end position="106"/>
    </location>
</feature>
<feature type="strand" evidence="6">
    <location>
        <begin position="108"/>
        <end position="114"/>
    </location>
</feature>
<feature type="strand" evidence="6">
    <location>
        <begin position="116"/>
        <end position="118"/>
    </location>
</feature>
<feature type="helix" evidence="6">
    <location>
        <begin position="119"/>
        <end position="129"/>
    </location>
</feature>
<feature type="strand" evidence="6">
    <location>
        <begin position="135"/>
        <end position="137"/>
    </location>
</feature>
<feature type="helix" evidence="6">
    <location>
        <begin position="141"/>
        <end position="155"/>
    </location>
</feature>
<feature type="helix" evidence="6">
    <location>
        <begin position="159"/>
        <end position="161"/>
    </location>
</feature>
<feature type="strand" evidence="6">
    <location>
        <begin position="166"/>
        <end position="171"/>
    </location>
</feature>
<feature type="strand" evidence="6">
    <location>
        <begin position="174"/>
        <end position="176"/>
    </location>
</feature>
<feature type="helix" evidence="6">
    <location>
        <begin position="178"/>
        <end position="180"/>
    </location>
</feature>
<feature type="helix" evidence="6">
    <location>
        <begin position="188"/>
        <end position="195"/>
    </location>
</feature>
<feature type="helix" evidence="6">
    <location>
        <begin position="201"/>
        <end position="211"/>
    </location>
</feature>
<feature type="helix" evidence="6">
    <location>
        <begin position="227"/>
        <end position="241"/>
    </location>
</feature>
<feature type="strand" evidence="6">
    <location>
        <begin position="246"/>
        <end position="253"/>
    </location>
</feature>
<feature type="turn" evidence="6">
    <location>
        <begin position="255"/>
        <end position="257"/>
    </location>
</feature>
<feature type="strand" evidence="6">
    <location>
        <begin position="258"/>
        <end position="268"/>
    </location>
</feature>
<feature type="strand" evidence="6">
    <location>
        <begin position="271"/>
        <end position="275"/>
    </location>
</feature>
<feature type="helix" evidence="6">
    <location>
        <begin position="282"/>
        <end position="296"/>
    </location>
</feature>
<reference key="1">
    <citation type="journal article" date="1996" name="Gene">
        <title>Sequence analysis of the L-lactate dehydrogenase-encoding gene of Deinococcus radiodurans, a suitable mesophilic counterpart for Thermus.</title>
        <authorList>
            <person name="Narumi I."/>
            <person name="Watanabe H."/>
        </authorList>
    </citation>
    <scope>NUCLEOTIDE SEQUENCE [GENOMIC DNA]</scope>
    <source>
        <strain>ATCC 13939 / DSM 20539 / JCM 16871 / CCUG 27074 / LMG 4051 / NBRC 15346 / NCIMB 9279 / VKM B-1422 / R1</strain>
    </source>
</reference>
<reference key="2">
    <citation type="submission" date="1997-07" db="EMBL/GenBank/DDBJ databases">
        <title>Revised nucleotide sequence of the Deinococcus radiodurans L-lactate dehydrogenase gene and the gene expression in Escherichia coli.</title>
        <authorList>
            <person name="Narumi I."/>
            <person name="Watanabe H."/>
        </authorList>
    </citation>
    <scope>SEQUENCE REVISION TO 270 AND 277</scope>
    <source>
        <strain>ATCC 13939 / DSM 20539 / JCM 16871 / CCUG 27074 / LMG 4051 / NBRC 15346 / NCIMB 9279 / VKM B-1422 / R1</strain>
    </source>
</reference>
<reference key="3">
    <citation type="journal article" date="1999" name="Science">
        <title>Genome sequence of the radioresistant bacterium Deinococcus radiodurans R1.</title>
        <authorList>
            <person name="White O."/>
            <person name="Eisen J.A."/>
            <person name="Heidelberg J.F."/>
            <person name="Hickey E.K."/>
            <person name="Peterson J.D."/>
            <person name="Dodson R.J."/>
            <person name="Haft D.H."/>
            <person name="Gwinn M.L."/>
            <person name="Nelson W.C."/>
            <person name="Richardson D.L."/>
            <person name="Moffat K.S."/>
            <person name="Qin H."/>
            <person name="Jiang L."/>
            <person name="Pamphile W."/>
            <person name="Crosby M."/>
            <person name="Shen M."/>
            <person name="Vamathevan J.J."/>
            <person name="Lam P."/>
            <person name="McDonald L.A."/>
            <person name="Utterback T.R."/>
            <person name="Zalewski C."/>
            <person name="Makarova K.S."/>
            <person name="Aravind L."/>
            <person name="Daly M.J."/>
            <person name="Minton K.W."/>
            <person name="Fleischmann R.D."/>
            <person name="Ketchum K.A."/>
            <person name="Nelson K.E."/>
            <person name="Salzberg S.L."/>
            <person name="Smith H.O."/>
            <person name="Venter J.C."/>
            <person name="Fraser C.M."/>
        </authorList>
    </citation>
    <scope>NUCLEOTIDE SEQUENCE [LARGE SCALE GENOMIC DNA]</scope>
    <source>
        <strain>ATCC 13939 / DSM 20539 / JCM 16871 / CCUG 27074 / LMG 4051 / NBRC 15346 / NCIMB 9279 / VKM B-1422 / R1</strain>
    </source>
</reference>
<reference key="4">
    <citation type="journal article" date="2007" name="J. Mol. Biol.">
        <title>Activity, stability and structural studies of lactate dehydrogenases adapted to extreme thermal environments.</title>
        <authorList>
            <person name="Coquelle N."/>
            <person name="Fioravanti E."/>
            <person name="Weik M."/>
            <person name="Vellieux F."/>
            <person name="Madern D."/>
        </authorList>
    </citation>
    <scope>X-RAY CRYSTALLOGRAPHY (2.50 ANGSTROMS)</scope>
    <scope>FUNCTION</scope>
    <scope>CATALYTIC ACTIVITY</scope>
    <scope>BIOPHYSICOCHEMICAL PROPERTIES</scope>
    <scope>SUBUNIT</scope>
</reference>
<sequence>MKVGVVGTGFVGSTAAFALVLRGSCSELVLVDRDEDRAQAEAEDIAHAAPVSHGTRVWHGGHSELADAQVVILTAGANQKPGESRLDLLEKNADIFRELVPQITRAAPDAVLLVTSNPVDLLTDLATQLAPGQPVIGSGTVLDSARFRHLMAQHAGVDGTHAHGYVLGEHGDSEVLAWSSAMVAGMPVADFMQAQNLPWNEQVRAKIDEGTRNAAASIIEGKRATYYGIGAALARITEAVLRDRRAVLTVSAPTPEYGVSLSLPRVVGRQGVLSTLHPKLTGDEQQKLEQSAGVLRGFKQQLGL</sequence>
<accession>P50933</accession>
<accession>O32512</accession>
<comment type="function">
    <text evidence="1 2">Catalyzes the conversion of lactate to pyruvate.</text>
</comment>
<comment type="catalytic activity">
    <reaction evidence="1 2">
        <text>(S)-lactate + NAD(+) = pyruvate + NADH + H(+)</text>
        <dbReference type="Rhea" id="RHEA:23444"/>
        <dbReference type="ChEBI" id="CHEBI:15361"/>
        <dbReference type="ChEBI" id="CHEBI:15378"/>
        <dbReference type="ChEBI" id="CHEBI:16651"/>
        <dbReference type="ChEBI" id="CHEBI:57540"/>
        <dbReference type="ChEBI" id="CHEBI:57945"/>
        <dbReference type="EC" id="1.1.1.27"/>
    </reaction>
</comment>
<comment type="activity regulation">
    <text evidence="1">Allosterically activated by fructose 1,6-bisphosphate (FBP).</text>
</comment>
<comment type="biophysicochemical properties">
    <kinetics>
        <KM evidence="2">0.21 mM for pyruvate</KM>
        <text evidence="2">kcat is 884 sec(-1) for pyruvate as substrate.</text>
    </kinetics>
    <temperatureDependence>
        <text evidence="2">Optimum temperature is 48 degrees Celsius.</text>
    </temperatureDependence>
</comment>
<comment type="pathway">
    <text evidence="1">Fermentation; pyruvate fermentation to lactate; (S)-lactate from pyruvate: step 1/1.</text>
</comment>
<comment type="subunit">
    <text evidence="1 2">Homotetramer.</text>
</comment>
<comment type="subcellular location">
    <subcellularLocation>
        <location evidence="1">Cytoplasm</location>
    </subcellularLocation>
</comment>
<comment type="similarity">
    <text evidence="1 5">Belongs to the LDH/MDH superfamily. LDH family.</text>
</comment>
<evidence type="ECO:0000255" key="1">
    <source>
        <dbReference type="HAMAP-Rule" id="MF_00488"/>
    </source>
</evidence>
<evidence type="ECO:0000269" key="2">
    <source>
    </source>
</evidence>
<evidence type="ECO:0000303" key="3">
    <source>
    </source>
</evidence>
<evidence type="ECO:0000303" key="4">
    <source>
    </source>
</evidence>
<evidence type="ECO:0000305" key="5"/>
<evidence type="ECO:0007829" key="6">
    <source>
        <dbReference type="PDB" id="2V6B"/>
    </source>
</evidence>
<dbReference type="EC" id="1.1.1.27" evidence="1 2"/>
<dbReference type="EMBL" id="AB005539">
    <property type="protein sequence ID" value="BAA21471.1"/>
    <property type="molecule type" value="Genomic_DNA"/>
</dbReference>
<dbReference type="EMBL" id="AE000513">
    <property type="protein sequence ID" value="AAF11912.1"/>
    <property type="molecule type" value="Genomic_DNA"/>
</dbReference>
<dbReference type="PIR" id="E75282">
    <property type="entry name" value="E75282"/>
</dbReference>
<dbReference type="RefSeq" id="NP_296085.1">
    <property type="nucleotide sequence ID" value="NC_001263.1"/>
</dbReference>
<dbReference type="RefSeq" id="WP_010888990.1">
    <property type="nucleotide sequence ID" value="NC_001263.1"/>
</dbReference>
<dbReference type="PDB" id="2V6B">
    <property type="method" value="X-ray"/>
    <property type="resolution" value="2.50 A"/>
    <property type="chains" value="A/B/C/D=1-304"/>
</dbReference>
<dbReference type="PDBsum" id="2V6B"/>
<dbReference type="SMR" id="P50933"/>
<dbReference type="FunCoup" id="P50933">
    <property type="interactions" value="205"/>
</dbReference>
<dbReference type="STRING" id="243230.DR_2364"/>
<dbReference type="PaxDb" id="243230-DR_2364"/>
<dbReference type="EnsemblBacteria" id="AAF11912">
    <property type="protein sequence ID" value="AAF11912"/>
    <property type="gene ID" value="DR_2364"/>
</dbReference>
<dbReference type="GeneID" id="69518614"/>
<dbReference type="KEGG" id="dra:DR_2364"/>
<dbReference type="PATRIC" id="fig|243230.17.peg.2598"/>
<dbReference type="eggNOG" id="COG0039">
    <property type="taxonomic scope" value="Bacteria"/>
</dbReference>
<dbReference type="HOGENOM" id="CLU_045401_1_1_0"/>
<dbReference type="InParanoid" id="P50933"/>
<dbReference type="OrthoDB" id="9802969at2"/>
<dbReference type="BRENDA" id="1.1.1.27">
    <property type="organism ID" value="1856"/>
</dbReference>
<dbReference type="UniPathway" id="UPA00554">
    <property type="reaction ID" value="UER00611"/>
</dbReference>
<dbReference type="EvolutionaryTrace" id="P50933"/>
<dbReference type="Proteomes" id="UP000002524">
    <property type="component" value="Chromosome 1"/>
</dbReference>
<dbReference type="GO" id="GO:0005737">
    <property type="term" value="C:cytoplasm"/>
    <property type="evidence" value="ECO:0007669"/>
    <property type="project" value="UniProtKB-SubCell"/>
</dbReference>
<dbReference type="GO" id="GO:0004459">
    <property type="term" value="F:L-lactate dehydrogenase activity"/>
    <property type="evidence" value="ECO:0000318"/>
    <property type="project" value="GO_Central"/>
</dbReference>
<dbReference type="GO" id="GO:0006096">
    <property type="term" value="P:glycolytic process"/>
    <property type="evidence" value="ECO:0007669"/>
    <property type="project" value="UniProtKB-UniRule"/>
</dbReference>
<dbReference type="GO" id="GO:0006089">
    <property type="term" value="P:lactate metabolic process"/>
    <property type="evidence" value="ECO:0000318"/>
    <property type="project" value="GO_Central"/>
</dbReference>
<dbReference type="GO" id="GO:0006090">
    <property type="term" value="P:pyruvate metabolic process"/>
    <property type="evidence" value="ECO:0000318"/>
    <property type="project" value="GO_Central"/>
</dbReference>
<dbReference type="CDD" id="cd05292">
    <property type="entry name" value="LDH_2"/>
    <property type="match status" value="1"/>
</dbReference>
<dbReference type="Gene3D" id="3.90.110.10">
    <property type="entry name" value="Lactate dehydrogenase/glycoside hydrolase, family 4, C-terminal"/>
    <property type="match status" value="1"/>
</dbReference>
<dbReference type="Gene3D" id="3.40.50.720">
    <property type="entry name" value="NAD(P)-binding Rossmann-like Domain"/>
    <property type="match status" value="1"/>
</dbReference>
<dbReference type="HAMAP" id="MF_00488">
    <property type="entry name" value="Lactate_dehydrog"/>
    <property type="match status" value="1"/>
</dbReference>
<dbReference type="InterPro" id="IPR001557">
    <property type="entry name" value="L-lactate/malate_DH"/>
</dbReference>
<dbReference type="InterPro" id="IPR011304">
    <property type="entry name" value="L-lactate_DH"/>
</dbReference>
<dbReference type="InterPro" id="IPR018177">
    <property type="entry name" value="L-lactate_DH_AS"/>
</dbReference>
<dbReference type="InterPro" id="IPR022383">
    <property type="entry name" value="Lactate/malate_DH_C"/>
</dbReference>
<dbReference type="InterPro" id="IPR001236">
    <property type="entry name" value="Lactate/malate_DH_N"/>
</dbReference>
<dbReference type="InterPro" id="IPR015955">
    <property type="entry name" value="Lactate_DH/Glyco_Ohase_4_C"/>
</dbReference>
<dbReference type="InterPro" id="IPR036291">
    <property type="entry name" value="NAD(P)-bd_dom_sf"/>
</dbReference>
<dbReference type="NCBIfam" id="TIGR01771">
    <property type="entry name" value="L-LDH-NAD"/>
    <property type="match status" value="1"/>
</dbReference>
<dbReference type="PANTHER" id="PTHR43128">
    <property type="entry name" value="L-2-HYDROXYCARBOXYLATE DEHYDROGENASE (NAD(P)(+))"/>
    <property type="match status" value="1"/>
</dbReference>
<dbReference type="PANTHER" id="PTHR43128:SF16">
    <property type="entry name" value="L-LACTATE DEHYDROGENASE"/>
    <property type="match status" value="1"/>
</dbReference>
<dbReference type="Pfam" id="PF02866">
    <property type="entry name" value="Ldh_1_C"/>
    <property type="match status" value="1"/>
</dbReference>
<dbReference type="Pfam" id="PF00056">
    <property type="entry name" value="Ldh_1_N"/>
    <property type="match status" value="1"/>
</dbReference>
<dbReference type="PIRSF" id="PIRSF000102">
    <property type="entry name" value="Lac_mal_DH"/>
    <property type="match status" value="1"/>
</dbReference>
<dbReference type="PRINTS" id="PR00086">
    <property type="entry name" value="LLDHDRGNASE"/>
</dbReference>
<dbReference type="SUPFAM" id="SSF56327">
    <property type="entry name" value="LDH C-terminal domain-like"/>
    <property type="match status" value="1"/>
</dbReference>
<dbReference type="SUPFAM" id="SSF51735">
    <property type="entry name" value="NAD(P)-binding Rossmann-fold domains"/>
    <property type="match status" value="1"/>
</dbReference>
<dbReference type="PROSITE" id="PS00064">
    <property type="entry name" value="L_LDH"/>
    <property type="match status" value="1"/>
</dbReference>
<proteinExistence type="evidence at protein level"/>
<gene>
    <name evidence="1 4" type="primary">ldh</name>
    <name type="ordered locus">DR_2364</name>
</gene>